<accession>P25578</accession>
<accession>D6VR07</accession>
<accession>O93974</accession>
<accession>P25570</accession>
<accession>P87011</accession>
<proteinExistence type="evidence at protein level"/>
<comment type="function">
    <text evidence="3">Essential for the viability of mitochondrial petite mutant. Catalyzes the committed step to the synthesis of the acidic phospholipids.</text>
</comment>
<comment type="catalytic activity">
    <reaction evidence="3">
        <text>a CDP-1,2-diacyl-sn-glycerol + sn-glycerol 3-phosphate = a 1,2-diacyl-sn-glycero-3-phospho-(1'-sn-glycero-3'-phosphate) + CMP + H(+)</text>
        <dbReference type="Rhea" id="RHEA:12593"/>
        <dbReference type="ChEBI" id="CHEBI:15378"/>
        <dbReference type="ChEBI" id="CHEBI:57597"/>
        <dbReference type="ChEBI" id="CHEBI:58332"/>
        <dbReference type="ChEBI" id="CHEBI:60110"/>
        <dbReference type="ChEBI" id="CHEBI:60377"/>
        <dbReference type="EC" id="2.7.8.5"/>
    </reaction>
</comment>
<comment type="pathway">
    <text>Phospholipid metabolism; phosphatidylglycerol biosynthesis; phosphatidylglycerol from CDP-diacylglycerol: step 1/2.</text>
</comment>
<comment type="subcellular location">
    <subcellularLocation>
        <location evidence="3 4">Mitochondrion</location>
    </subcellularLocation>
</comment>
<comment type="induction">
    <text evidence="4">Repressed by inositol and choline.</text>
</comment>
<comment type="similarity">
    <text evidence="5">Belongs to the CDP-alcohol phosphatidyltransferase class-II family.</text>
</comment>
<comment type="sequence caution" evidence="5">
    <conflict type="erroneous initiation">
        <sequence resource="EMBL-CDS" id="CAA88175"/>
    </conflict>
    <text>Truncated N-terminus.</text>
</comment>
<comment type="sequence caution" evidence="5">
    <conflict type="frameshift">
        <sequence resource="EMBL-CDS" id="CAA88175"/>
    </conflict>
</comment>
<organism>
    <name type="scientific">Saccharomyces cerevisiae (strain ATCC 204508 / S288c)</name>
    <name type="common">Baker's yeast</name>
    <dbReference type="NCBI Taxonomy" id="559292"/>
    <lineage>
        <taxon>Eukaryota</taxon>
        <taxon>Fungi</taxon>
        <taxon>Dikarya</taxon>
        <taxon>Ascomycota</taxon>
        <taxon>Saccharomycotina</taxon>
        <taxon>Saccharomycetes</taxon>
        <taxon>Saccharomycetales</taxon>
        <taxon>Saccharomycetaceae</taxon>
        <taxon>Saccharomyces</taxon>
    </lineage>
</organism>
<evidence type="ECO:0000255" key="1"/>
<evidence type="ECO:0000255" key="2">
    <source>
        <dbReference type="PROSITE-ProRule" id="PRU00153"/>
    </source>
</evidence>
<evidence type="ECO:0000269" key="3">
    <source>
    </source>
</evidence>
<evidence type="ECO:0000269" key="4">
    <source>
    </source>
</evidence>
<evidence type="ECO:0000305" key="5"/>
<keyword id="KW-0067">ATP-binding</keyword>
<keyword id="KW-0444">Lipid biosynthesis</keyword>
<keyword id="KW-0443">Lipid metabolism</keyword>
<keyword id="KW-0496">Mitochondrion</keyword>
<keyword id="KW-0547">Nucleotide-binding</keyword>
<keyword id="KW-0594">Phospholipid biosynthesis</keyword>
<keyword id="KW-1208">Phospholipid metabolism</keyword>
<keyword id="KW-1185">Reference proteome</keyword>
<keyword id="KW-0677">Repeat</keyword>
<keyword id="KW-0808">Transferase</keyword>
<sequence length="521" mass="59370">MTTRLLQLTRPHYRLLSLPLQKPFNIKRQMSAANPSPFGNYLNTITKSLQQNLQTCFHFQAKEIDIIESPSQFYDLLKTKILNSQNRIFIASLYLGKSETELVDCISQALTKNPKLKVSFLLDGLRGTRELPSACSATLLSSLVAKYGSERVDCRLYKTPAYHGWKKVLVPKRFNEGLGLQHMKIYGFDNEVILSGANLSNDYFTNRQDRYYLFKSRNFSNYYFKLHQLISSFSYQIIKPMVDGSINIIWPDSNPTVEPTKNKRLFLREASQLLDGFLKSSKQSLPITAVGQFSTLVYPISQFTPLFPKYNDKSTEKRTILSLLSTITSNAISWTFTAGYFNILPDIKAKLLATPVAEANVITASPFANGFYQSKGVSSNLPGAYLYLSKKFLQDVCRYRQDHAITLREWQRGVVNKPNGWSYHAKGIWLSARDKNDANNWKPFITVIGSSNYTRRAYSLDLESNALIITRDEELRKKMKAELDNLLQYTKPVTLEDFQSDPERHVGTGVKIATSILGKKL</sequence>
<reference key="1">
    <citation type="journal article" date="1995" name="Yeast">
        <title>Molecular characterization of the PEL1 gene encoding a putative phosphatidylserine synthase.</title>
        <authorList>
            <person name="Janitor M."/>
            <person name="Jarosch E."/>
            <person name="Schweyen R."/>
            <person name="Subik J."/>
        </authorList>
    </citation>
    <scope>NUCLEOTIDE SEQUENCE [GENOMIC DNA]</scope>
</reference>
<reference key="2">
    <citation type="journal article" date="1998" name="J. Biol. Chem.">
        <title>The PEL1 gene (renamed PGS1) encodes the phosphatidylglycero-phosphate synthase of Saccharomyces cerevisiae.</title>
        <authorList>
            <person name="Chang C."/>
            <person name="Heacock N."/>
            <person name="Clancey C."/>
            <person name="Dowhan W."/>
        </authorList>
    </citation>
    <scope>NUCLEOTIDE SEQUENCE [GENOMIC DNA]</scope>
    <scope>FUNCTION</scope>
    <scope>CATALYTIC ACTIVITY</scope>
    <scope>SUBCELLULAR LOCATION</scope>
    <source>
        <strain>YP501</strain>
    </source>
</reference>
<reference key="3">
    <citation type="journal article" date="1992" name="Nature">
        <title>The complete DNA sequence of yeast chromosome III.</title>
        <authorList>
            <person name="Oliver S.G."/>
            <person name="van der Aart Q.J.M."/>
            <person name="Agostoni-Carbone M.L."/>
            <person name="Aigle M."/>
            <person name="Alberghina L."/>
            <person name="Alexandraki D."/>
            <person name="Antoine G."/>
            <person name="Anwar R."/>
            <person name="Ballesta J.P.G."/>
            <person name="Benit P."/>
            <person name="Berben G."/>
            <person name="Bergantino E."/>
            <person name="Biteau N."/>
            <person name="Bolle P.-A."/>
            <person name="Bolotin-Fukuhara M."/>
            <person name="Brown A."/>
            <person name="Brown A.J.P."/>
            <person name="Buhler J.-M."/>
            <person name="Carcano C."/>
            <person name="Carignani G."/>
            <person name="Cederberg H."/>
            <person name="Chanet R."/>
            <person name="Contreras R."/>
            <person name="Crouzet M."/>
            <person name="Daignan-Fornier B."/>
            <person name="Defoor E."/>
            <person name="Delgado M.D."/>
            <person name="Demolder J."/>
            <person name="Doira C."/>
            <person name="Dubois E."/>
            <person name="Dujon B."/>
            <person name="Duesterhoeft A."/>
            <person name="Erdmann D."/>
            <person name="Esteban M."/>
            <person name="Fabre F."/>
            <person name="Fairhead C."/>
            <person name="Faye G."/>
            <person name="Feldmann H."/>
            <person name="Fiers W."/>
            <person name="Francingues-Gaillard M.-C."/>
            <person name="Franco L."/>
            <person name="Frontali L."/>
            <person name="Fukuhara H."/>
            <person name="Fuller L.J."/>
            <person name="Galland P."/>
            <person name="Gent M.E."/>
            <person name="Gigot D."/>
            <person name="Gilliquet V."/>
            <person name="Glansdorff N."/>
            <person name="Goffeau A."/>
            <person name="Grenson M."/>
            <person name="Grisanti P."/>
            <person name="Grivell L.A."/>
            <person name="de Haan M."/>
            <person name="Haasemann M."/>
            <person name="Hatat D."/>
            <person name="Hoenicka J."/>
            <person name="Hegemann J.H."/>
            <person name="Herbert C.J."/>
            <person name="Hilger F."/>
            <person name="Hohmann S."/>
            <person name="Hollenberg C.P."/>
            <person name="Huse K."/>
            <person name="Iborra F."/>
            <person name="Indge K.J."/>
            <person name="Isono K."/>
            <person name="Jacq C."/>
            <person name="Jacquet M."/>
            <person name="James C.M."/>
            <person name="Jauniaux J.-C."/>
            <person name="Jia Y."/>
            <person name="Jimenez A."/>
            <person name="Kelly A."/>
            <person name="Kleinhans U."/>
            <person name="Kreisl P."/>
            <person name="Lanfranchi G."/>
            <person name="Lewis C."/>
            <person name="van der Linden C.G."/>
            <person name="Lucchini G."/>
            <person name="Lutzenkirchen K."/>
            <person name="Maat M.J."/>
            <person name="Mallet L."/>
            <person name="Mannhaupt G."/>
            <person name="Martegani E."/>
            <person name="Mathieu A."/>
            <person name="Maurer C.T.C."/>
            <person name="McConnell D."/>
            <person name="McKee R.A."/>
            <person name="Messenguy F."/>
            <person name="Mewes H.-W."/>
            <person name="Molemans F."/>
            <person name="Montague M.A."/>
            <person name="Muzi Falconi M."/>
            <person name="Navas L."/>
            <person name="Newlon C.S."/>
            <person name="Noone D."/>
            <person name="Pallier C."/>
            <person name="Panzeri L."/>
            <person name="Pearson B.M."/>
            <person name="Perea J."/>
            <person name="Philippsen P."/>
            <person name="Pierard A."/>
            <person name="Planta R.J."/>
            <person name="Plevani P."/>
            <person name="Poetsch B."/>
            <person name="Pohl F.M."/>
            <person name="Purnelle B."/>
            <person name="Ramezani Rad M."/>
            <person name="Rasmussen S.W."/>
            <person name="Raynal A."/>
            <person name="Remacha M.A."/>
            <person name="Richterich P."/>
            <person name="Roberts A.B."/>
            <person name="Rodriguez F."/>
            <person name="Sanz E."/>
            <person name="Schaaff-Gerstenschlaeger I."/>
            <person name="Scherens B."/>
            <person name="Schweitzer B."/>
            <person name="Shu Y."/>
            <person name="Skala J."/>
            <person name="Slonimski P.P."/>
            <person name="Sor F."/>
            <person name="Soustelle C."/>
            <person name="Spiegelberg R."/>
            <person name="Stateva L.I."/>
            <person name="Steensma H.Y."/>
            <person name="Steiner S."/>
            <person name="Thierry A."/>
            <person name="Thireos G."/>
            <person name="Tzermia M."/>
            <person name="Urrestarazu L.A."/>
            <person name="Valle G."/>
            <person name="Vetter I."/>
            <person name="van Vliet-Reedijk J.C."/>
            <person name="Voet M."/>
            <person name="Volckaert G."/>
            <person name="Vreken P."/>
            <person name="Wang H."/>
            <person name="Warmington J.R."/>
            <person name="von Wettstein D."/>
            <person name="Wicksteed B.L."/>
            <person name="Wilson C."/>
            <person name="Wurst H."/>
            <person name="Xu G."/>
            <person name="Yoshikawa A."/>
            <person name="Zimmermann F.K."/>
            <person name="Sgouros J.G."/>
        </authorList>
    </citation>
    <scope>NUCLEOTIDE SEQUENCE [LARGE SCALE GENOMIC DNA]</scope>
    <source>
        <strain>ATCC 204508 / S288c</strain>
    </source>
</reference>
<reference key="4">
    <citation type="submission" date="1996-01" db="EMBL/GenBank/DDBJ databases">
        <authorList>
            <person name="Gromadka R."/>
        </authorList>
    </citation>
    <scope>SEQUENCE REVISION</scope>
</reference>
<reference key="5">
    <citation type="submission" date="2001-06" db="EMBL/GenBank/DDBJ databases">
        <authorList>
            <person name="Valles G."/>
            <person name="Volckaerts G."/>
        </authorList>
    </citation>
    <scope>SEQUENCE REVISION</scope>
</reference>
<reference key="6">
    <citation type="journal article" date="2014" name="G3 (Bethesda)">
        <title>The reference genome sequence of Saccharomyces cerevisiae: Then and now.</title>
        <authorList>
            <person name="Engel S.R."/>
            <person name="Dietrich F.S."/>
            <person name="Fisk D.G."/>
            <person name="Binkley G."/>
            <person name="Balakrishnan R."/>
            <person name="Costanzo M.C."/>
            <person name="Dwight S.S."/>
            <person name="Hitz B.C."/>
            <person name="Karra K."/>
            <person name="Nash R.S."/>
            <person name="Weng S."/>
            <person name="Wong E.D."/>
            <person name="Lloyd P."/>
            <person name="Skrzypek M.S."/>
            <person name="Miyasato S.R."/>
            <person name="Simison M."/>
            <person name="Cherry J.M."/>
        </authorList>
    </citation>
    <scope>GENOME REANNOTATION</scope>
    <source>
        <strain>ATCC 204508 / S288c</strain>
    </source>
</reference>
<reference key="7">
    <citation type="journal article" date="1993" name="Curr. Genet.">
        <title>Molecular cloning of the PEL1 gene of Saccharomyces cerevisiae that is essential for the viability of petite mutants.</title>
        <authorList>
            <person name="Janitor M."/>
            <person name="Subik J."/>
        </authorList>
    </citation>
    <scope>PRELIMINARY NUCLEOTIDE SEQUENCE OF 30-182</scope>
</reference>
<reference key="8">
    <citation type="journal article" date="1998" name="Curr. Genet.">
        <title>Phosphatidylglycerolphosphate synthase encoded by the PEL1/PGS1 gene in Saccharomyces cerevisiae is localized in mitochondria and its expression is regulated by phospholipid precursors.</title>
        <authorList>
            <person name="Dzugasova V."/>
            <person name="Obernauerova M."/>
            <person name="Horvathova K."/>
            <person name="Vachova M."/>
            <person name="Zakova M."/>
            <person name="Subik J."/>
        </authorList>
    </citation>
    <scope>SUBCELLULAR LOCATION</scope>
    <scope>INDUCTION</scope>
</reference>
<gene>
    <name type="primary">PGS1</name>
    <name type="synonym">PEL1</name>
    <name type="ordered locus">YCL004W</name>
    <name type="ORF">YCL003W</name>
    <name type="ORF">YCL3W</name>
    <name type="ORF">YCL4W</name>
</gene>
<protein>
    <recommendedName>
        <fullName>CDP-diacylglycerol--glycerol-3-phosphate 3-phosphatidyltransferase</fullName>
        <ecNumber>2.7.8.5</ecNumber>
    </recommendedName>
    <alternativeName>
        <fullName>Phosphatidylglycerophosphate synthase</fullName>
        <shortName>PGP synthase</shortName>
    </alternativeName>
</protein>
<name>PGPS1_YEAST</name>
<dbReference type="EC" id="2.7.8.5"/>
<dbReference type="EMBL" id="Z48162">
    <property type="protein sequence ID" value="CAA88175.1"/>
    <property type="status" value="ALT_SEQ"/>
    <property type="molecule type" value="Genomic_DNA"/>
</dbReference>
<dbReference type="EMBL" id="AJ012047">
    <property type="protein sequence ID" value="CAA09905.1"/>
    <property type="molecule type" value="Genomic_DNA"/>
</dbReference>
<dbReference type="EMBL" id="X59720">
    <property type="protein sequence ID" value="CAC42966.1"/>
    <property type="molecule type" value="Genomic_DNA"/>
</dbReference>
<dbReference type="EMBL" id="BK006937">
    <property type="protein sequence ID" value="DAA07476.1"/>
    <property type="molecule type" value="Genomic_DNA"/>
</dbReference>
<dbReference type="PIR" id="T11166">
    <property type="entry name" value="T11166"/>
</dbReference>
<dbReference type="RefSeq" id="NP_009923.2">
    <property type="nucleotide sequence ID" value="NM_001178653.1"/>
</dbReference>
<dbReference type="SMR" id="P25578"/>
<dbReference type="BioGRID" id="30975">
    <property type="interactions" value="54"/>
</dbReference>
<dbReference type="DIP" id="DIP-8753N"/>
<dbReference type="FunCoup" id="P25578">
    <property type="interactions" value="517"/>
</dbReference>
<dbReference type="MINT" id="P25578"/>
<dbReference type="STRING" id="4932.YCL004W"/>
<dbReference type="SwissLipids" id="SLP:000000239"/>
<dbReference type="iPTMnet" id="P25578"/>
<dbReference type="PaxDb" id="4932-YCL004W"/>
<dbReference type="PeptideAtlas" id="P25578"/>
<dbReference type="EnsemblFungi" id="YCL004W_mRNA">
    <property type="protein sequence ID" value="YCL004W"/>
    <property type="gene ID" value="YCL004W"/>
</dbReference>
<dbReference type="GeneID" id="850352"/>
<dbReference type="KEGG" id="sce:YCL004W"/>
<dbReference type="AGR" id="SGD:S000000510"/>
<dbReference type="SGD" id="S000000510">
    <property type="gene designation" value="PGS1"/>
</dbReference>
<dbReference type="VEuPathDB" id="FungiDB:YCL004W"/>
<dbReference type="eggNOG" id="KOG3964">
    <property type="taxonomic scope" value="Eukaryota"/>
</dbReference>
<dbReference type="GeneTree" id="ENSGT00390000002373"/>
<dbReference type="HOGENOM" id="CLU_030471_1_1_1"/>
<dbReference type="InParanoid" id="P25578"/>
<dbReference type="OMA" id="HKCLAQC"/>
<dbReference type="OrthoDB" id="10250191at2759"/>
<dbReference type="BioCyc" id="MetaCyc:YCL004W-MONOMER"/>
<dbReference type="BioCyc" id="YEAST:YCL004W-MONOMER"/>
<dbReference type="UniPathway" id="UPA00084">
    <property type="reaction ID" value="UER00503"/>
</dbReference>
<dbReference type="BioGRID-ORCS" id="850352">
    <property type="hits" value="2 hits in 10 CRISPR screens"/>
</dbReference>
<dbReference type="PRO" id="PR:P25578"/>
<dbReference type="Proteomes" id="UP000002311">
    <property type="component" value="Chromosome III"/>
</dbReference>
<dbReference type="RNAct" id="P25578">
    <property type="molecule type" value="protein"/>
</dbReference>
<dbReference type="GO" id="GO:0005739">
    <property type="term" value="C:mitochondrion"/>
    <property type="evidence" value="ECO:0000314"/>
    <property type="project" value="SGD"/>
</dbReference>
<dbReference type="GO" id="GO:0005524">
    <property type="term" value="F:ATP binding"/>
    <property type="evidence" value="ECO:0007669"/>
    <property type="project" value="UniProtKB-KW"/>
</dbReference>
<dbReference type="GO" id="GO:0008444">
    <property type="term" value="F:CDP-diacylglycerol-glycerol-3-phosphate 3-phosphatidyltransferase activity"/>
    <property type="evidence" value="ECO:0000315"/>
    <property type="project" value="SGD"/>
</dbReference>
<dbReference type="GO" id="GO:0032049">
    <property type="term" value="P:cardiolipin biosynthetic process"/>
    <property type="evidence" value="ECO:0000315"/>
    <property type="project" value="SGD"/>
</dbReference>
<dbReference type="CDD" id="cd09135">
    <property type="entry name" value="PLDc_PGS1_euk_1"/>
    <property type="match status" value="1"/>
</dbReference>
<dbReference type="CDD" id="cd09137">
    <property type="entry name" value="PLDc_PGS1_euk_2"/>
    <property type="match status" value="1"/>
</dbReference>
<dbReference type="FunFam" id="3.30.870.10:FF:000044">
    <property type="entry name" value="CDP-diacylglycerol--glycerol-3-phosphate 3-phosphatidyltransferase"/>
    <property type="match status" value="1"/>
</dbReference>
<dbReference type="FunFam" id="3.30.870.10:FF:000046">
    <property type="entry name" value="CDP-diacylglycerol--glycerol-3-phosphate 3-phosphatidyltransferase"/>
    <property type="match status" value="1"/>
</dbReference>
<dbReference type="Gene3D" id="3.30.870.10">
    <property type="entry name" value="Endonuclease Chain A"/>
    <property type="match status" value="2"/>
</dbReference>
<dbReference type="InterPro" id="IPR016270">
    <property type="entry name" value="PGS1"/>
</dbReference>
<dbReference type="InterPro" id="IPR001736">
    <property type="entry name" value="PLipase_D/transphosphatidylase"/>
</dbReference>
<dbReference type="PANTHER" id="PTHR12586:SF1">
    <property type="entry name" value="CDP-DIACYLGLYCEROL--GLYCEROL-3-PHOSPHATE 3-PHOSPHATIDYLTRANSFERASE, MITOCHONDRIAL"/>
    <property type="match status" value="1"/>
</dbReference>
<dbReference type="PANTHER" id="PTHR12586">
    <property type="entry name" value="CDP-DIACYLGLYCEROL--SERINE O-PHOSPHATIDYLTRANSFERASE"/>
    <property type="match status" value="1"/>
</dbReference>
<dbReference type="PIRSF" id="PIRSF000850">
    <property type="entry name" value="Phospholipase_D_PSS"/>
    <property type="match status" value="1"/>
</dbReference>
<dbReference type="SMART" id="SM00155">
    <property type="entry name" value="PLDc"/>
    <property type="match status" value="2"/>
</dbReference>
<dbReference type="SUPFAM" id="SSF56024">
    <property type="entry name" value="Phospholipase D/nuclease"/>
    <property type="match status" value="2"/>
</dbReference>
<dbReference type="PROSITE" id="PS50035">
    <property type="entry name" value="PLD"/>
    <property type="match status" value="1"/>
</dbReference>
<feature type="chain" id="PRO_0000056827" description="CDP-diacylglycerol--glycerol-3-phosphate 3-phosphatidyltransferase">
    <location>
        <begin position="1"/>
        <end position="521"/>
    </location>
</feature>
<feature type="domain" description="PLD phosphodiesterase 1" evidence="2">
    <location>
        <begin position="177"/>
        <end position="203"/>
    </location>
</feature>
<feature type="domain" description="PLD phosphodiesterase 2" evidence="2">
    <location>
        <begin position="419"/>
        <end position="457"/>
    </location>
</feature>
<feature type="active site" evidence="2">
    <location>
        <position position="182"/>
    </location>
</feature>
<feature type="active site" evidence="2">
    <location>
        <position position="184"/>
    </location>
</feature>
<feature type="active site" evidence="2">
    <location>
        <position position="189"/>
    </location>
</feature>
<feature type="binding site" evidence="1">
    <location>
        <begin position="91"/>
        <end position="98"/>
    </location>
    <ligand>
        <name>ATP</name>
        <dbReference type="ChEBI" id="CHEBI:30616"/>
    </ligand>
</feature>
<feature type="sequence conflict" description="In Ref. 1; CAA88175." evidence="5" ref="1">
    <original>F</original>
    <variation>Y</variation>
    <location>
        <position position="498"/>
    </location>
</feature>